<sequence length="948" mass="99356">MKKNIALMALTGILTLASCGQNGTGTTPTADACATANTCSVTVNISGVSSADFDVTMDGKTTSMTLSNGQKLPVAKTGTVTLTPKAKDGYTTPAAQSTTISSTNLTPSVNFAYTTVPSTGNGNGNGGTTPTQPFTLNITSPTNGAAATTGTPIRVVFTSSVALSSATCKIGNSAAVNAQVSSTGGYCDVTPTTAGGGLITVTGTANGQTVSSTVTVDVKAPVVDNRYGTVTPAGDQELTLTNEGIVKDADNGWRRLGQGVSTPSDPNGNVDIYVKGTVNFSVNAAAGSKVEVFLARTTGSDVPTNDDVQAGDVLRSVASTSGTETFSLDSRRLAEFDGVRKWIVVRINGTQVTYQPVIADNKGPQQPDPELNGVQNAYSNILNNYNNSGLTYVRGDVNVFTGNPSLQDREFGQAPLGSSFVQRRPSGFESIRYYLVPETAFGNKALQESDEMLRAKAIKSVATVVSAPVLEPGTVKATSFSRVIGSGATSTVTPKAQDNVTYRVYAISRDQLGNETASATYELVRFDNVGPTITGSVIRDTSDLPFASQEPERCLSDIATITLGGITDNAGGVGLNPGQGLTFTLGGRQIQAGQFDTNQLADGEYTIGFNSLTDALGNPVVSAPTNAKVYIDNTDPTVNFNRAVMQGTFASGERVSVESDASDGGCGVYETRLFWDTDNGVVDDATTTPAIGHPVQFARQRVTDGAKADSLNAGWNALQLPNGAGAVYLRALVVDRAGNATISTTPIVVNAKITNQARPLLGGFDAFKRNASAQFMSNSNAISGVNGTAVTPNTTANSALDNILSLDSVGTLTTNAYLPRGATETAITEKIRNVGAYGRFDATQWNRIRDYQLNTDPTLRSAYVNAGNLANQRGNNWRIRTPWVELGSSDTANTQQKFDFNSDLLNDFYFGRTFGNNDNVNLFSYDQFNGIVSGTAGAYSFYGETVQK</sequence>
<keyword id="KW-0002">3D-structure</keyword>
<keyword id="KW-0134">Cell wall</keyword>
<keyword id="KW-0961">Cell wall biogenesis/degradation</keyword>
<keyword id="KW-1015">Disulfide bond</keyword>
<keyword id="KW-0325">Glycoprotein</keyword>
<keyword id="KW-0449">Lipoprotein</keyword>
<keyword id="KW-1185">Reference proteome</keyword>
<keyword id="KW-0701">S-layer</keyword>
<keyword id="KW-0964">Secreted</keyword>
<keyword id="KW-0732">Signal</keyword>
<protein>
    <recommendedName>
        <fullName>Hexagonally packed intermediate-layer surface protein</fullName>
    </recommendedName>
</protein>
<reference key="1">
    <citation type="journal article" date="1999" name="Science">
        <title>Genome sequence of the radioresistant bacterium Deinococcus radiodurans R1.</title>
        <authorList>
            <person name="White O."/>
            <person name="Eisen J.A."/>
            <person name="Heidelberg J.F."/>
            <person name="Hickey E.K."/>
            <person name="Peterson J.D."/>
            <person name="Dodson R.J."/>
            <person name="Haft D.H."/>
            <person name="Gwinn M.L."/>
            <person name="Nelson W.C."/>
            <person name="Richardson D.L."/>
            <person name="Moffat K.S."/>
            <person name="Qin H."/>
            <person name="Jiang L."/>
            <person name="Pamphile W."/>
            <person name="Crosby M."/>
            <person name="Shen M."/>
            <person name="Vamathevan J.J."/>
            <person name="Lam P."/>
            <person name="McDonald L.A."/>
            <person name="Utterback T.R."/>
            <person name="Zalewski C."/>
            <person name="Makarova K.S."/>
            <person name="Aravind L."/>
            <person name="Daly M.J."/>
            <person name="Minton K.W."/>
            <person name="Fleischmann R.D."/>
            <person name="Ketchum K.A."/>
            <person name="Nelson K.E."/>
            <person name="Salzberg S.L."/>
            <person name="Smith H.O."/>
            <person name="Venter J.C."/>
            <person name="Fraser C.M."/>
        </authorList>
    </citation>
    <scope>NUCLEOTIDE SEQUENCE [LARGE SCALE GENOMIC DNA]</scope>
    <source>
        <strain>ATCC 13939 / DSM 20539 / JCM 16871 / CCUG 27074 / LMG 4051 / NBRC 15346 / NCIMB 9279 / VKM B-1422 / R1</strain>
    </source>
</reference>
<comment type="function">
    <text evidence="1">Shape maintenance, possible protection from noxious enzymes or exogenous and unsettling DNA, and may mediate homotypic cell-cell contacts.</text>
</comment>
<comment type="subcellular location">
    <subcellularLocation>
        <location evidence="1">Secreted</location>
        <location evidence="1">Cell wall</location>
        <location evidence="1">S-layer</location>
    </subcellularLocation>
    <text evidence="1">This bacterium is covered by a S-layer with hexagonal symmetry.</text>
</comment>
<comment type="PTM">
    <text evidence="1">Glycosylated. Contains tightly bound reducing sugars (six per polypeptide chain) and fatty acids (covalently bound and located in the N-terminal region) (By similarity).</text>
</comment>
<comment type="miscellaneous">
    <text evidence="1">The hydrophilic C-terminal region rich in aromatic AA could be engaged in interactions with nucleic acids, and the bound fatty acids and the N-terminal region could serve to anchor the layer to the outer membrane of D.radiodurans. HPI layer contain about 30% beta structure and virtually no alpha helix (By similarity).</text>
</comment>
<accession>P56867</accession>
<gene>
    <name type="primary">hpi</name>
    <name type="ordered locus">DR_2508</name>
</gene>
<organism>
    <name type="scientific">Deinococcus radiodurans (strain ATCC 13939 / DSM 20539 / JCM 16871 / CCUG 27074 / LMG 4051 / NBRC 15346 / NCIMB 9279 / VKM B-1422 / R1)</name>
    <dbReference type="NCBI Taxonomy" id="243230"/>
    <lineage>
        <taxon>Bacteria</taxon>
        <taxon>Thermotogati</taxon>
        <taxon>Deinococcota</taxon>
        <taxon>Deinococci</taxon>
        <taxon>Deinococcales</taxon>
        <taxon>Deinococcaceae</taxon>
        <taxon>Deinococcus</taxon>
    </lineage>
</organism>
<name>HPI_DEIRA</name>
<proteinExistence type="evidence at protein level"/>
<feature type="signal peptide" evidence="2">
    <location>
        <begin position="1"/>
        <end position="17"/>
    </location>
</feature>
<feature type="chain" id="PRO_0000032623" description="Hexagonally packed intermediate-layer surface protein">
    <location>
        <begin position="18"/>
        <end position="948"/>
    </location>
</feature>
<feature type="disulfide bond" evidence="1">
    <location>
        <begin position="168"/>
        <end position="187"/>
    </location>
</feature>
<feature type="disulfide bond" evidence="1">
    <location>
        <begin position="554"/>
        <end position="666"/>
    </location>
</feature>
<feature type="strand" evidence="3">
    <location>
        <begin position="136"/>
        <end position="141"/>
    </location>
</feature>
<feature type="strand" evidence="3">
    <location>
        <begin position="146"/>
        <end position="148"/>
    </location>
</feature>
<feature type="strand" evidence="3">
    <location>
        <begin position="153"/>
        <end position="161"/>
    </location>
</feature>
<feature type="strand" evidence="3">
    <location>
        <begin position="164"/>
        <end position="170"/>
    </location>
</feature>
<feature type="strand" evidence="3">
    <location>
        <begin position="179"/>
        <end position="181"/>
    </location>
</feature>
<feature type="strand" evidence="3">
    <location>
        <begin position="184"/>
        <end position="189"/>
    </location>
</feature>
<feature type="strand" evidence="3">
    <location>
        <begin position="193"/>
        <end position="205"/>
    </location>
</feature>
<feature type="strand" evidence="3">
    <location>
        <begin position="208"/>
        <end position="219"/>
    </location>
</feature>
<feature type="strand" evidence="3">
    <location>
        <begin position="230"/>
        <end position="232"/>
    </location>
</feature>
<feature type="helix" evidence="3">
    <location>
        <begin position="234"/>
        <end position="236"/>
    </location>
</feature>
<feature type="strand" evidence="3">
    <location>
        <begin position="244"/>
        <end position="246"/>
    </location>
</feature>
<feature type="strand" evidence="3">
    <location>
        <begin position="250"/>
        <end position="260"/>
    </location>
</feature>
<feature type="strand" evidence="3">
    <location>
        <begin position="262"/>
        <end position="264"/>
    </location>
</feature>
<feature type="strand" evidence="3">
    <location>
        <begin position="267"/>
        <end position="283"/>
    </location>
</feature>
<feature type="strand" evidence="3">
    <location>
        <begin position="290"/>
        <end position="295"/>
    </location>
</feature>
<feature type="turn" evidence="3">
    <location>
        <begin position="302"/>
        <end position="305"/>
    </location>
</feature>
<feature type="helix" evidence="3">
    <location>
        <begin position="310"/>
        <end position="312"/>
    </location>
</feature>
<feature type="strand" evidence="3">
    <location>
        <begin position="313"/>
        <end position="319"/>
    </location>
</feature>
<feature type="strand" evidence="3">
    <location>
        <begin position="321"/>
        <end position="329"/>
    </location>
</feature>
<feature type="helix" evidence="3">
    <location>
        <begin position="334"/>
        <end position="336"/>
    </location>
</feature>
<feature type="strand" evidence="3">
    <location>
        <begin position="339"/>
        <end position="347"/>
    </location>
</feature>
<feature type="turn" evidence="3">
    <location>
        <begin position="348"/>
        <end position="350"/>
    </location>
</feature>
<feature type="strand" evidence="3">
    <location>
        <begin position="351"/>
        <end position="359"/>
    </location>
</feature>
<feature type="strand" evidence="3">
    <location>
        <begin position="369"/>
        <end position="373"/>
    </location>
</feature>
<feature type="strand" evidence="3">
    <location>
        <begin position="380"/>
        <end position="383"/>
    </location>
</feature>
<feature type="strand" evidence="3">
    <location>
        <begin position="391"/>
        <end position="402"/>
    </location>
</feature>
<feature type="strand" evidence="3">
    <location>
        <begin position="408"/>
        <end position="410"/>
    </location>
</feature>
<feature type="strand" evidence="3">
    <location>
        <begin position="419"/>
        <end position="422"/>
    </location>
</feature>
<feature type="strand" evidence="3">
    <location>
        <begin position="428"/>
        <end position="437"/>
    </location>
</feature>
<feature type="helix" evidence="3">
    <location>
        <begin position="438"/>
        <end position="442"/>
    </location>
</feature>
<feature type="helix" evidence="3">
    <location>
        <begin position="451"/>
        <end position="460"/>
    </location>
</feature>
<feature type="strand" evidence="3">
    <location>
        <begin position="463"/>
        <end position="465"/>
    </location>
</feature>
<feature type="strand" evidence="3">
    <location>
        <begin position="482"/>
        <end position="485"/>
    </location>
</feature>
<feature type="turn" evidence="3">
    <location>
        <begin position="487"/>
        <end position="489"/>
    </location>
</feature>
<feature type="strand" evidence="3">
    <location>
        <begin position="493"/>
        <end position="495"/>
    </location>
</feature>
<feature type="strand" evidence="3">
    <location>
        <begin position="502"/>
        <end position="510"/>
    </location>
</feature>
<feature type="strand" evidence="3">
    <location>
        <begin position="515"/>
        <end position="517"/>
    </location>
</feature>
<feature type="strand" evidence="3">
    <location>
        <begin position="522"/>
        <end position="526"/>
    </location>
</feature>
<feature type="strand" evidence="3">
    <location>
        <begin position="537"/>
        <end position="540"/>
    </location>
</feature>
<feature type="strand" evidence="3">
    <location>
        <begin position="544"/>
        <end position="546"/>
    </location>
</feature>
<feature type="turn" evidence="3">
    <location>
        <begin position="551"/>
        <end position="553"/>
    </location>
</feature>
<feature type="strand" evidence="3">
    <location>
        <begin position="557"/>
        <end position="562"/>
    </location>
</feature>
<feature type="strand" evidence="3">
    <location>
        <begin position="583"/>
        <end position="585"/>
    </location>
</feature>
<feature type="strand" evidence="3">
    <location>
        <begin position="588"/>
        <end position="590"/>
    </location>
</feature>
<feature type="strand" evidence="3">
    <location>
        <begin position="592"/>
        <end position="596"/>
    </location>
</feature>
<feature type="helix" evidence="3">
    <location>
        <begin position="597"/>
        <end position="599"/>
    </location>
</feature>
<feature type="strand" evidence="3">
    <location>
        <begin position="602"/>
        <end position="609"/>
    </location>
</feature>
<feature type="strand" evidence="3">
    <location>
        <begin position="628"/>
        <end position="631"/>
    </location>
</feature>
<feature type="strand" evidence="3">
    <location>
        <begin position="637"/>
        <end position="643"/>
    </location>
</feature>
<feature type="strand" evidence="3">
    <location>
        <begin position="648"/>
        <end position="650"/>
    </location>
</feature>
<feature type="strand" evidence="3">
    <location>
        <begin position="653"/>
        <end position="662"/>
    </location>
</feature>
<feature type="strand" evidence="3">
    <location>
        <begin position="664"/>
        <end position="666"/>
    </location>
</feature>
<feature type="strand" evidence="3">
    <location>
        <begin position="668"/>
        <end position="677"/>
    </location>
</feature>
<feature type="strand" evidence="3">
    <location>
        <begin position="695"/>
        <end position="701"/>
    </location>
</feature>
<feature type="strand" evidence="3">
    <location>
        <begin position="707"/>
        <end position="716"/>
    </location>
</feature>
<feature type="strand" evidence="3">
    <location>
        <begin position="724"/>
        <end position="735"/>
    </location>
</feature>
<feature type="strand" evidence="3">
    <location>
        <begin position="740"/>
        <end position="750"/>
    </location>
</feature>
<feature type="strand" evidence="3">
    <location>
        <begin position="764"/>
        <end position="768"/>
    </location>
</feature>
<feature type="helix" evidence="3">
    <location>
        <begin position="798"/>
        <end position="800"/>
    </location>
</feature>
<feature type="strand" evidence="3">
    <location>
        <begin position="802"/>
        <end position="810"/>
    </location>
</feature>
<feature type="strand" evidence="3">
    <location>
        <begin position="823"/>
        <end position="825"/>
    </location>
</feature>
<feature type="strand" evidence="3">
    <location>
        <begin position="831"/>
        <end position="839"/>
    </location>
</feature>
<feature type="helix" evidence="3">
    <location>
        <begin position="842"/>
        <end position="853"/>
    </location>
</feature>
<feature type="helix" evidence="3">
    <location>
        <begin position="857"/>
        <end position="860"/>
    </location>
</feature>
<feature type="helix" evidence="3">
    <location>
        <begin position="866"/>
        <end position="874"/>
    </location>
</feature>
<feature type="strand" evidence="3">
    <location>
        <begin position="883"/>
        <end position="888"/>
    </location>
</feature>
<feature type="strand" evidence="3">
    <location>
        <begin position="896"/>
        <end position="902"/>
    </location>
</feature>
<feature type="strand" evidence="3">
    <location>
        <begin position="912"/>
        <end position="914"/>
    </location>
</feature>
<feature type="turn" evidence="3">
    <location>
        <begin position="920"/>
        <end position="923"/>
    </location>
</feature>
<feature type="strand" evidence="3">
    <location>
        <begin position="926"/>
        <end position="934"/>
    </location>
</feature>
<feature type="strand" evidence="3">
    <location>
        <begin position="939"/>
        <end position="945"/>
    </location>
</feature>
<evidence type="ECO:0000250" key="1"/>
<evidence type="ECO:0000255" key="2">
    <source>
        <dbReference type="PROSITE-ProRule" id="PRU00303"/>
    </source>
</evidence>
<evidence type="ECO:0007829" key="3">
    <source>
        <dbReference type="PDB" id="8CKA"/>
    </source>
</evidence>
<dbReference type="EMBL" id="AE000513">
    <property type="protein sequence ID" value="AAF12049.1"/>
    <property type="molecule type" value="Genomic_DNA"/>
</dbReference>
<dbReference type="PIR" id="C75265">
    <property type="entry name" value="C75265"/>
</dbReference>
<dbReference type="RefSeq" id="NP_296228.1">
    <property type="nucleotide sequence ID" value="NC_001263.1"/>
</dbReference>
<dbReference type="RefSeq" id="WP_010889133.1">
    <property type="nucleotide sequence ID" value="NC_001263.1"/>
</dbReference>
<dbReference type="PDB" id="8CKA">
    <property type="method" value="EM"/>
    <property type="resolution" value="2.54 A"/>
    <property type="chains" value="A/B=1-948"/>
</dbReference>
<dbReference type="PDBsum" id="8CKA"/>
<dbReference type="EMDB" id="EMD-16694"/>
<dbReference type="SMR" id="P56867"/>
<dbReference type="STRING" id="243230.DR_2508"/>
<dbReference type="PaxDb" id="243230-DR_2508"/>
<dbReference type="EnsemblBacteria" id="AAF12049">
    <property type="protein sequence ID" value="AAF12049"/>
    <property type="gene ID" value="DR_2508"/>
</dbReference>
<dbReference type="GeneID" id="69518761"/>
<dbReference type="KEGG" id="dra:DR_2508"/>
<dbReference type="PATRIC" id="fig|243230.17.peg.2748"/>
<dbReference type="HOGENOM" id="CLU_310310_0_0_0"/>
<dbReference type="InParanoid" id="P56867"/>
<dbReference type="OrthoDB" id="54092at2"/>
<dbReference type="Proteomes" id="UP000002524">
    <property type="component" value="Chromosome 1"/>
</dbReference>
<dbReference type="GO" id="GO:0005576">
    <property type="term" value="C:extracellular region"/>
    <property type="evidence" value="ECO:0007669"/>
    <property type="project" value="UniProtKB-KW"/>
</dbReference>
<dbReference type="GO" id="GO:0030115">
    <property type="term" value="C:S-layer"/>
    <property type="evidence" value="ECO:0007669"/>
    <property type="project" value="UniProtKB-SubCell"/>
</dbReference>
<dbReference type="GO" id="GO:0071555">
    <property type="term" value="P:cell wall organization"/>
    <property type="evidence" value="ECO:0007669"/>
    <property type="project" value="UniProtKB-KW"/>
</dbReference>
<dbReference type="PROSITE" id="PS51257">
    <property type="entry name" value="PROKAR_LIPOPROTEIN"/>
    <property type="match status" value="1"/>
</dbReference>